<feature type="chain" id="PRO_1000061660" description="Coenzyme PQQ synthesis protein B">
    <location>
        <begin position="1"/>
        <end position="305"/>
    </location>
</feature>
<sequence length="305" mass="32588">MTSIRVLGSAAGGGFPQWNCNCHNCDGVRRGTVRATPRTQSSIALTGDGPDAILVNASPDILQQLRQAPALQPARAPRDTAIAAVVLMDAQIDHVTGLLMLREHREALPLYATAAVLDDLGAAFPLTRILSHYCGLRTHALPCDGTAFSVPPLDGLTLTAIPLESKAPPYSPNRHAPRAGDNIGLRIEDRRSGRSAFYAPGLGRIDDHVFAELHSADIVLVDGTFWRDDEMQAPGFSGKSAADMGHLALSGPGGMIEVLERLPASRKILIHINNTNPVLVEDSPERAELARHGIEVAYDGMEIAL</sequence>
<reference key="1">
    <citation type="journal article" date="2006" name="Nat. Biotechnol.">
        <title>Genome sequence of the bioplastic-producing 'Knallgas' bacterium Ralstonia eutropha H16.</title>
        <authorList>
            <person name="Pohlmann A."/>
            <person name="Fricke W.F."/>
            <person name="Reinecke F."/>
            <person name="Kusian B."/>
            <person name="Liesegang H."/>
            <person name="Cramm R."/>
            <person name="Eitinger T."/>
            <person name="Ewering C."/>
            <person name="Poetter M."/>
            <person name="Schwartz E."/>
            <person name="Strittmatter A."/>
            <person name="Voss I."/>
            <person name="Gottschalk G."/>
            <person name="Steinbuechel A."/>
            <person name="Friedrich B."/>
            <person name="Bowien B."/>
        </authorList>
    </citation>
    <scope>NUCLEOTIDE SEQUENCE [LARGE SCALE GENOMIC DNA]</scope>
    <source>
        <strain>ATCC 17699 / DSM 428 / KCTC 22496 / NCIMB 10442 / H16 / Stanier 337</strain>
    </source>
</reference>
<keyword id="KW-0884">PQQ biosynthesis</keyword>
<keyword id="KW-1185">Reference proteome</keyword>
<keyword id="KW-0813">Transport</keyword>
<dbReference type="EMBL" id="AM260480">
    <property type="protein sequence ID" value="CAJ95843.1"/>
    <property type="molecule type" value="Genomic_DNA"/>
</dbReference>
<dbReference type="RefSeq" id="WP_011616980.1">
    <property type="nucleotide sequence ID" value="NC_008314.1"/>
</dbReference>
<dbReference type="SMR" id="Q0K2D1"/>
<dbReference type="STRING" id="381666.H16_B1052"/>
<dbReference type="KEGG" id="reh:H16_B1052"/>
<dbReference type="eggNOG" id="COG1235">
    <property type="taxonomic scope" value="Bacteria"/>
</dbReference>
<dbReference type="HOGENOM" id="CLU_061120_0_0_4"/>
<dbReference type="OrthoDB" id="9778305at2"/>
<dbReference type="UniPathway" id="UPA00539"/>
<dbReference type="Proteomes" id="UP000008210">
    <property type="component" value="Chromosome 2"/>
</dbReference>
<dbReference type="GO" id="GO:0018189">
    <property type="term" value="P:pyrroloquinoline quinone biosynthetic process"/>
    <property type="evidence" value="ECO:0007669"/>
    <property type="project" value="UniProtKB-UniRule"/>
</dbReference>
<dbReference type="CDD" id="cd16274">
    <property type="entry name" value="PQQB-like_MBL-fold"/>
    <property type="match status" value="1"/>
</dbReference>
<dbReference type="Gene3D" id="3.60.15.10">
    <property type="entry name" value="Ribonuclease Z/Hydroxyacylglutathione hydrolase-like"/>
    <property type="match status" value="1"/>
</dbReference>
<dbReference type="HAMAP" id="MF_00653">
    <property type="entry name" value="PQQ_syn_PqqB"/>
    <property type="match status" value="1"/>
</dbReference>
<dbReference type="InterPro" id="IPR001279">
    <property type="entry name" value="Metallo-B-lactamas"/>
</dbReference>
<dbReference type="InterPro" id="IPR011842">
    <property type="entry name" value="PQQ_synth_PqqB"/>
</dbReference>
<dbReference type="InterPro" id="IPR036866">
    <property type="entry name" value="RibonucZ/Hydroxyglut_hydro"/>
</dbReference>
<dbReference type="NCBIfam" id="TIGR02108">
    <property type="entry name" value="PQQ_syn_pqqB"/>
    <property type="match status" value="1"/>
</dbReference>
<dbReference type="PANTHER" id="PTHR42663:SF7">
    <property type="entry name" value="COENZYME PQQ SYNTHESIS PROTEIN B"/>
    <property type="match status" value="1"/>
</dbReference>
<dbReference type="PANTHER" id="PTHR42663">
    <property type="entry name" value="HYDROLASE C777.06C-RELATED-RELATED"/>
    <property type="match status" value="1"/>
</dbReference>
<dbReference type="Pfam" id="PF12706">
    <property type="entry name" value="Lactamase_B_2"/>
    <property type="match status" value="1"/>
</dbReference>
<dbReference type="SUPFAM" id="SSF56281">
    <property type="entry name" value="Metallo-hydrolase/oxidoreductase"/>
    <property type="match status" value="1"/>
</dbReference>
<protein>
    <recommendedName>
        <fullName evidence="1">Coenzyme PQQ synthesis protein B</fullName>
    </recommendedName>
    <alternativeName>
        <fullName evidence="1">Pyrroloquinoline quinone biosynthesis protein B</fullName>
    </alternativeName>
</protein>
<name>PQQB_CUPNH</name>
<evidence type="ECO:0000255" key="1">
    <source>
        <dbReference type="HAMAP-Rule" id="MF_00653"/>
    </source>
</evidence>
<organism>
    <name type="scientific">Cupriavidus necator (strain ATCC 17699 / DSM 428 / KCTC 22496 / NCIMB 10442 / H16 / Stanier 337)</name>
    <name type="common">Ralstonia eutropha</name>
    <dbReference type="NCBI Taxonomy" id="381666"/>
    <lineage>
        <taxon>Bacteria</taxon>
        <taxon>Pseudomonadati</taxon>
        <taxon>Pseudomonadota</taxon>
        <taxon>Betaproteobacteria</taxon>
        <taxon>Burkholderiales</taxon>
        <taxon>Burkholderiaceae</taxon>
        <taxon>Cupriavidus</taxon>
    </lineage>
</organism>
<accession>Q0K2D1</accession>
<comment type="function">
    <text evidence="1">May be involved in the transport of PQQ or its precursor to the periplasm.</text>
</comment>
<comment type="pathway">
    <text evidence="1">Cofactor biosynthesis; pyrroloquinoline quinone biosynthesis.</text>
</comment>
<comment type="similarity">
    <text evidence="1">Belongs to the PqqB family.</text>
</comment>
<proteinExistence type="inferred from homology"/>
<gene>
    <name evidence="1" type="primary">pqqB</name>
    <name type="ordered locus">H16_B1052</name>
</gene>